<comment type="function">
    <text evidence="1">Catalyzes the initial step of the lipid cycle reactions in the biosynthesis of the cell wall peptidoglycan: transfers peptidoglycan precursor phospho-MurNAc-pentapeptide from UDP-MurNAc-pentapeptide onto the lipid carrier undecaprenyl phosphate, yielding undecaprenyl-pyrophosphoryl-MurNAc-pentapeptide, known as lipid I.</text>
</comment>
<comment type="catalytic activity">
    <reaction evidence="1">
        <text>UDP-N-acetyl-alpha-D-muramoyl-L-alanyl-gamma-D-glutamyl-meso-2,6-diaminopimeloyl-D-alanyl-D-alanine + di-trans,octa-cis-undecaprenyl phosphate = di-trans,octa-cis-undecaprenyl diphospho-N-acetyl-alpha-D-muramoyl-L-alanyl-D-glutamyl-meso-2,6-diaminopimeloyl-D-alanyl-D-alanine + UMP</text>
        <dbReference type="Rhea" id="RHEA:28386"/>
        <dbReference type="ChEBI" id="CHEBI:57865"/>
        <dbReference type="ChEBI" id="CHEBI:60392"/>
        <dbReference type="ChEBI" id="CHEBI:61386"/>
        <dbReference type="ChEBI" id="CHEBI:61387"/>
        <dbReference type="EC" id="2.7.8.13"/>
    </reaction>
</comment>
<comment type="cofactor">
    <cofactor evidence="1">
        <name>Mg(2+)</name>
        <dbReference type="ChEBI" id="CHEBI:18420"/>
    </cofactor>
</comment>
<comment type="pathway">
    <text evidence="1">Cell wall biogenesis; peptidoglycan biosynthesis.</text>
</comment>
<comment type="subcellular location">
    <subcellularLocation>
        <location evidence="1">Cell inner membrane</location>
        <topology evidence="1">Multi-pass membrane protein</topology>
    </subcellularLocation>
</comment>
<comment type="similarity">
    <text evidence="1">Belongs to the glycosyltransferase 4 family. MraY subfamily.</text>
</comment>
<name>MRAY_SPHAL</name>
<sequence>MLYWLAEWLGFPGALNLIRYLSFRSGAAVATAMILGLWIGPRFILMLRMRQGKGQPIRDDGPQSHLAKKGTPTMGGLMILISLMISALLWMDLSNRFVWACLFVTAGFAVVGFLDDYDKVTKSSHRGIPGRVRLLVEFLIAGVAVLLIVSRTGTDLYLPFFSGIVIPLGPFYYVFAMVLIVGFGNAVNLTDGLDGLATFPVIIASLTFLVIVYLSGNVKFAGYLGIPHVPGAGELAVFAAAIIGACLAFLWFNAPPAAVFMGDTGSLALGGALATIAVTAQHELVLVLVGGLFVVEALSVIIQVFWYKRTGKRVFRMAPIHHHFEQLGWPESTVVIRFWIVSIVLALAGLATLKLR</sequence>
<accession>Q1GRX6</accession>
<reference key="1">
    <citation type="journal article" date="2009" name="Proc. Natl. Acad. Sci. U.S.A.">
        <title>The genomic basis of trophic strategy in marine bacteria.</title>
        <authorList>
            <person name="Lauro F.M."/>
            <person name="McDougald D."/>
            <person name="Thomas T."/>
            <person name="Williams T.J."/>
            <person name="Egan S."/>
            <person name="Rice S."/>
            <person name="DeMaere M.Z."/>
            <person name="Ting L."/>
            <person name="Ertan H."/>
            <person name="Johnson J."/>
            <person name="Ferriera S."/>
            <person name="Lapidus A."/>
            <person name="Anderson I."/>
            <person name="Kyrpides N."/>
            <person name="Munk A.C."/>
            <person name="Detter C."/>
            <person name="Han C.S."/>
            <person name="Brown M.V."/>
            <person name="Robb F.T."/>
            <person name="Kjelleberg S."/>
            <person name="Cavicchioli R."/>
        </authorList>
    </citation>
    <scope>NUCLEOTIDE SEQUENCE [LARGE SCALE GENOMIC DNA]</scope>
    <source>
        <strain>DSM 13593 / LMG 18877 / RB2256</strain>
    </source>
</reference>
<keyword id="KW-0131">Cell cycle</keyword>
<keyword id="KW-0132">Cell division</keyword>
<keyword id="KW-0997">Cell inner membrane</keyword>
<keyword id="KW-1003">Cell membrane</keyword>
<keyword id="KW-0133">Cell shape</keyword>
<keyword id="KW-0961">Cell wall biogenesis/degradation</keyword>
<keyword id="KW-0460">Magnesium</keyword>
<keyword id="KW-0472">Membrane</keyword>
<keyword id="KW-0479">Metal-binding</keyword>
<keyword id="KW-0573">Peptidoglycan synthesis</keyword>
<keyword id="KW-1185">Reference proteome</keyword>
<keyword id="KW-0808">Transferase</keyword>
<keyword id="KW-0812">Transmembrane</keyword>
<keyword id="KW-1133">Transmembrane helix</keyword>
<dbReference type="EC" id="2.7.8.13" evidence="1"/>
<dbReference type="EMBL" id="CP000356">
    <property type="protein sequence ID" value="ABF53596.1"/>
    <property type="molecule type" value="Genomic_DNA"/>
</dbReference>
<dbReference type="RefSeq" id="WP_011542174.1">
    <property type="nucleotide sequence ID" value="NC_008048.1"/>
</dbReference>
<dbReference type="SMR" id="Q1GRX6"/>
<dbReference type="STRING" id="317655.Sala_1884"/>
<dbReference type="KEGG" id="sal:Sala_1884"/>
<dbReference type="eggNOG" id="COG0472">
    <property type="taxonomic scope" value="Bacteria"/>
</dbReference>
<dbReference type="HOGENOM" id="CLU_023982_0_0_5"/>
<dbReference type="OrthoDB" id="9805475at2"/>
<dbReference type="UniPathway" id="UPA00219"/>
<dbReference type="Proteomes" id="UP000006578">
    <property type="component" value="Chromosome"/>
</dbReference>
<dbReference type="GO" id="GO:0005886">
    <property type="term" value="C:plasma membrane"/>
    <property type="evidence" value="ECO:0007669"/>
    <property type="project" value="UniProtKB-SubCell"/>
</dbReference>
<dbReference type="GO" id="GO:0046872">
    <property type="term" value="F:metal ion binding"/>
    <property type="evidence" value="ECO:0007669"/>
    <property type="project" value="UniProtKB-KW"/>
</dbReference>
<dbReference type="GO" id="GO:0008963">
    <property type="term" value="F:phospho-N-acetylmuramoyl-pentapeptide-transferase activity"/>
    <property type="evidence" value="ECO:0007669"/>
    <property type="project" value="UniProtKB-UniRule"/>
</dbReference>
<dbReference type="GO" id="GO:0051992">
    <property type="term" value="F:UDP-N-acetylmuramoyl-L-alanyl-D-glutamyl-meso-2,6-diaminopimelyl-D-alanyl-D-alanine:undecaprenyl-phosphate transferase activity"/>
    <property type="evidence" value="ECO:0007669"/>
    <property type="project" value="RHEA"/>
</dbReference>
<dbReference type="GO" id="GO:0051301">
    <property type="term" value="P:cell division"/>
    <property type="evidence" value="ECO:0007669"/>
    <property type="project" value="UniProtKB-KW"/>
</dbReference>
<dbReference type="GO" id="GO:0071555">
    <property type="term" value="P:cell wall organization"/>
    <property type="evidence" value="ECO:0007669"/>
    <property type="project" value="UniProtKB-KW"/>
</dbReference>
<dbReference type="GO" id="GO:0009252">
    <property type="term" value="P:peptidoglycan biosynthetic process"/>
    <property type="evidence" value="ECO:0007669"/>
    <property type="project" value="UniProtKB-UniRule"/>
</dbReference>
<dbReference type="GO" id="GO:0008360">
    <property type="term" value="P:regulation of cell shape"/>
    <property type="evidence" value="ECO:0007669"/>
    <property type="project" value="UniProtKB-KW"/>
</dbReference>
<dbReference type="CDD" id="cd06852">
    <property type="entry name" value="GT_MraY"/>
    <property type="match status" value="1"/>
</dbReference>
<dbReference type="HAMAP" id="MF_00038">
    <property type="entry name" value="MraY"/>
    <property type="match status" value="1"/>
</dbReference>
<dbReference type="InterPro" id="IPR000715">
    <property type="entry name" value="Glycosyl_transferase_4"/>
</dbReference>
<dbReference type="InterPro" id="IPR003524">
    <property type="entry name" value="PNAcMuramoyl-5peptid_Trfase"/>
</dbReference>
<dbReference type="InterPro" id="IPR018480">
    <property type="entry name" value="PNAcMuramoyl-5peptid_Trfase_CS"/>
</dbReference>
<dbReference type="NCBIfam" id="TIGR00445">
    <property type="entry name" value="mraY"/>
    <property type="match status" value="1"/>
</dbReference>
<dbReference type="PANTHER" id="PTHR22926">
    <property type="entry name" value="PHOSPHO-N-ACETYLMURAMOYL-PENTAPEPTIDE-TRANSFERASE"/>
    <property type="match status" value="1"/>
</dbReference>
<dbReference type="PANTHER" id="PTHR22926:SF5">
    <property type="entry name" value="PHOSPHO-N-ACETYLMURAMOYL-PENTAPEPTIDE-TRANSFERASE HOMOLOG"/>
    <property type="match status" value="1"/>
</dbReference>
<dbReference type="Pfam" id="PF00953">
    <property type="entry name" value="Glycos_transf_4"/>
    <property type="match status" value="1"/>
</dbReference>
<dbReference type="Pfam" id="PF10555">
    <property type="entry name" value="MraY_sig1"/>
    <property type="match status" value="1"/>
</dbReference>
<dbReference type="PROSITE" id="PS01347">
    <property type="entry name" value="MRAY_1"/>
    <property type="match status" value="1"/>
</dbReference>
<dbReference type="PROSITE" id="PS01348">
    <property type="entry name" value="MRAY_2"/>
    <property type="match status" value="1"/>
</dbReference>
<protein>
    <recommendedName>
        <fullName evidence="1">Phospho-N-acetylmuramoyl-pentapeptide-transferase</fullName>
        <ecNumber evidence="1">2.7.8.13</ecNumber>
    </recommendedName>
    <alternativeName>
        <fullName evidence="1">UDP-MurNAc-pentapeptide phosphotransferase</fullName>
    </alternativeName>
</protein>
<feature type="chain" id="PRO_1000003069" description="Phospho-N-acetylmuramoyl-pentapeptide-transferase">
    <location>
        <begin position="1"/>
        <end position="356"/>
    </location>
</feature>
<feature type="transmembrane region" description="Helical" evidence="1">
    <location>
        <begin position="27"/>
        <end position="47"/>
    </location>
</feature>
<feature type="transmembrane region" description="Helical" evidence="1">
    <location>
        <begin position="73"/>
        <end position="93"/>
    </location>
</feature>
<feature type="transmembrane region" description="Helical" evidence="1">
    <location>
        <begin position="97"/>
        <end position="117"/>
    </location>
</feature>
<feature type="transmembrane region" description="Helical" evidence="1">
    <location>
        <begin position="134"/>
        <end position="154"/>
    </location>
</feature>
<feature type="transmembrane region" description="Helical" evidence="1">
    <location>
        <begin position="163"/>
        <end position="183"/>
    </location>
</feature>
<feature type="transmembrane region" description="Helical" evidence="1">
    <location>
        <begin position="195"/>
        <end position="215"/>
    </location>
</feature>
<feature type="transmembrane region" description="Helical" evidence="1">
    <location>
        <begin position="232"/>
        <end position="252"/>
    </location>
</feature>
<feature type="transmembrane region" description="Helical" evidence="1">
    <location>
        <begin position="258"/>
        <end position="278"/>
    </location>
</feature>
<feature type="transmembrane region" description="Helical" evidence="1">
    <location>
        <begin position="285"/>
        <end position="305"/>
    </location>
</feature>
<feature type="transmembrane region" description="Helical" evidence="1">
    <location>
        <begin position="333"/>
        <end position="353"/>
    </location>
</feature>
<proteinExistence type="inferred from homology"/>
<evidence type="ECO:0000255" key="1">
    <source>
        <dbReference type="HAMAP-Rule" id="MF_00038"/>
    </source>
</evidence>
<gene>
    <name evidence="1" type="primary">mraY</name>
    <name type="ordered locus">Sala_1884</name>
</gene>
<organism>
    <name type="scientific">Sphingopyxis alaskensis (strain DSM 13593 / LMG 18877 / RB2256)</name>
    <name type="common">Sphingomonas alaskensis</name>
    <dbReference type="NCBI Taxonomy" id="317655"/>
    <lineage>
        <taxon>Bacteria</taxon>
        <taxon>Pseudomonadati</taxon>
        <taxon>Pseudomonadota</taxon>
        <taxon>Alphaproteobacteria</taxon>
        <taxon>Sphingomonadales</taxon>
        <taxon>Sphingomonadaceae</taxon>
        <taxon>Sphingopyxis</taxon>
    </lineage>
</organism>